<reference key="1">
    <citation type="journal article" date="2006" name="J. Bacteriol.">
        <title>Complete genome sequence of the dehalorespiring bacterium Desulfitobacterium hafniense Y51 and comparison with Dehalococcoides ethenogenes 195.</title>
        <authorList>
            <person name="Nonaka H."/>
            <person name="Keresztes G."/>
            <person name="Shinoda Y."/>
            <person name="Ikenaga Y."/>
            <person name="Abe M."/>
            <person name="Naito K."/>
            <person name="Inatomi K."/>
            <person name="Furukawa K."/>
            <person name="Inui M."/>
            <person name="Yukawa H."/>
        </authorList>
    </citation>
    <scope>NUCLEOTIDE SEQUENCE [LARGE SCALE GENOMIC DNA]</scope>
    <source>
        <strain>Y51</strain>
    </source>
</reference>
<evidence type="ECO:0000255" key="1">
    <source>
        <dbReference type="HAMAP-Rule" id="MF_01333"/>
    </source>
</evidence>
<evidence type="ECO:0000305" key="2"/>
<comment type="function">
    <text evidence="1">This is one of the proteins that bind and probably mediate the attachment of the 5S RNA into the large ribosomal subunit, where it forms part of the central protuberance. In the 70S ribosome it contacts protein S13 of the 30S subunit (bridge B1b), connecting the 2 subunits; this bridge is implicated in subunit movement. Contacts the P site tRNA; the 5S rRNA and some of its associated proteins might help stabilize positioning of ribosome-bound tRNAs.</text>
</comment>
<comment type="subunit">
    <text evidence="1">Part of the 50S ribosomal subunit; part of the 5S rRNA/L5/L18/L25 subcomplex. Contacts the 5S rRNA and the P site tRNA. Forms a bridge to the 30S subunit in the 70S ribosome.</text>
</comment>
<comment type="similarity">
    <text evidence="1">Belongs to the universal ribosomal protein uL5 family.</text>
</comment>
<feature type="chain" id="PRO_1000052727" description="Large ribosomal subunit protein uL5">
    <location>
        <begin position="1"/>
        <end position="179"/>
    </location>
</feature>
<accession>Q250M0</accession>
<protein>
    <recommendedName>
        <fullName evidence="1">Large ribosomal subunit protein uL5</fullName>
    </recommendedName>
    <alternativeName>
        <fullName evidence="2">50S ribosomal protein L5</fullName>
    </alternativeName>
</protein>
<keyword id="KW-1185">Reference proteome</keyword>
<keyword id="KW-0687">Ribonucleoprotein</keyword>
<keyword id="KW-0689">Ribosomal protein</keyword>
<keyword id="KW-0694">RNA-binding</keyword>
<keyword id="KW-0699">rRNA-binding</keyword>
<keyword id="KW-0820">tRNA-binding</keyword>
<dbReference type="EMBL" id="AP008230">
    <property type="protein sequence ID" value="BAE82272.1"/>
    <property type="molecule type" value="Genomic_DNA"/>
</dbReference>
<dbReference type="RefSeq" id="WP_011459103.1">
    <property type="nucleotide sequence ID" value="NC_007907.1"/>
</dbReference>
<dbReference type="SMR" id="Q250M0"/>
<dbReference type="STRING" id="138119.DSY0483"/>
<dbReference type="KEGG" id="dsy:DSY0483"/>
<dbReference type="eggNOG" id="COG0094">
    <property type="taxonomic scope" value="Bacteria"/>
</dbReference>
<dbReference type="HOGENOM" id="CLU_061015_2_1_9"/>
<dbReference type="Proteomes" id="UP000001946">
    <property type="component" value="Chromosome"/>
</dbReference>
<dbReference type="GO" id="GO:1990904">
    <property type="term" value="C:ribonucleoprotein complex"/>
    <property type="evidence" value="ECO:0007669"/>
    <property type="project" value="UniProtKB-KW"/>
</dbReference>
<dbReference type="GO" id="GO:0005840">
    <property type="term" value="C:ribosome"/>
    <property type="evidence" value="ECO:0007669"/>
    <property type="project" value="UniProtKB-KW"/>
</dbReference>
<dbReference type="GO" id="GO:0019843">
    <property type="term" value="F:rRNA binding"/>
    <property type="evidence" value="ECO:0007669"/>
    <property type="project" value="UniProtKB-UniRule"/>
</dbReference>
<dbReference type="GO" id="GO:0003735">
    <property type="term" value="F:structural constituent of ribosome"/>
    <property type="evidence" value="ECO:0007669"/>
    <property type="project" value="InterPro"/>
</dbReference>
<dbReference type="GO" id="GO:0000049">
    <property type="term" value="F:tRNA binding"/>
    <property type="evidence" value="ECO:0007669"/>
    <property type="project" value="UniProtKB-UniRule"/>
</dbReference>
<dbReference type="GO" id="GO:0006412">
    <property type="term" value="P:translation"/>
    <property type="evidence" value="ECO:0007669"/>
    <property type="project" value="UniProtKB-UniRule"/>
</dbReference>
<dbReference type="FunFam" id="3.30.1440.10:FF:000001">
    <property type="entry name" value="50S ribosomal protein L5"/>
    <property type="match status" value="1"/>
</dbReference>
<dbReference type="Gene3D" id="3.30.1440.10">
    <property type="match status" value="1"/>
</dbReference>
<dbReference type="HAMAP" id="MF_01333_B">
    <property type="entry name" value="Ribosomal_uL5_B"/>
    <property type="match status" value="1"/>
</dbReference>
<dbReference type="InterPro" id="IPR002132">
    <property type="entry name" value="Ribosomal_uL5"/>
</dbReference>
<dbReference type="InterPro" id="IPR020930">
    <property type="entry name" value="Ribosomal_uL5_bac-type"/>
</dbReference>
<dbReference type="InterPro" id="IPR031309">
    <property type="entry name" value="Ribosomal_uL5_C"/>
</dbReference>
<dbReference type="InterPro" id="IPR020929">
    <property type="entry name" value="Ribosomal_uL5_CS"/>
</dbReference>
<dbReference type="InterPro" id="IPR022803">
    <property type="entry name" value="Ribosomal_uL5_dom_sf"/>
</dbReference>
<dbReference type="InterPro" id="IPR031310">
    <property type="entry name" value="Ribosomal_uL5_N"/>
</dbReference>
<dbReference type="NCBIfam" id="NF000585">
    <property type="entry name" value="PRK00010.1"/>
    <property type="match status" value="1"/>
</dbReference>
<dbReference type="PANTHER" id="PTHR11994">
    <property type="entry name" value="60S RIBOSOMAL PROTEIN L11-RELATED"/>
    <property type="match status" value="1"/>
</dbReference>
<dbReference type="Pfam" id="PF00281">
    <property type="entry name" value="Ribosomal_L5"/>
    <property type="match status" value="1"/>
</dbReference>
<dbReference type="Pfam" id="PF00673">
    <property type="entry name" value="Ribosomal_L5_C"/>
    <property type="match status" value="1"/>
</dbReference>
<dbReference type="PIRSF" id="PIRSF002161">
    <property type="entry name" value="Ribosomal_L5"/>
    <property type="match status" value="1"/>
</dbReference>
<dbReference type="SUPFAM" id="SSF55282">
    <property type="entry name" value="RL5-like"/>
    <property type="match status" value="1"/>
</dbReference>
<dbReference type="PROSITE" id="PS00358">
    <property type="entry name" value="RIBOSOMAL_L5"/>
    <property type="match status" value="1"/>
</dbReference>
<sequence length="179" mass="20093">MARLKDKFSNEIAPALQQKFNYKNVMQIPKLEKVVINVGVGEAIQNSKAIDAAVGDLSKITGQKPVVTRAKKSIAAFKLRTGMPIGTKVTLRGDRMYEFVDRLMNVALPRVRDFHGVSDKAFDGRGNYTLGIKEQLIFPEIEYDKIDKVRGMDIIFVTTAKTDEEARELLGMLGMPFRK</sequence>
<proteinExistence type="inferred from homology"/>
<name>RL5_DESHY</name>
<gene>
    <name evidence="1" type="primary">rplE</name>
    <name type="ordered locus">DSY0483</name>
</gene>
<organism>
    <name type="scientific">Desulfitobacterium hafniense (strain Y51)</name>
    <dbReference type="NCBI Taxonomy" id="138119"/>
    <lineage>
        <taxon>Bacteria</taxon>
        <taxon>Bacillati</taxon>
        <taxon>Bacillota</taxon>
        <taxon>Clostridia</taxon>
        <taxon>Eubacteriales</taxon>
        <taxon>Desulfitobacteriaceae</taxon>
        <taxon>Desulfitobacterium</taxon>
    </lineage>
</organism>